<evidence type="ECO:0000255" key="1"/>
<evidence type="ECO:0000305" key="2"/>
<reference key="1">
    <citation type="submission" date="2010-03" db="EMBL/GenBank/DDBJ databases">
        <title>The genome sequence of Coccidioides posadasii strain Silveira.</title>
        <authorList>
            <consortium name="The Broad Institute Genome Sequencing Center for Infectious Disease"/>
            <person name="Neafsey D."/>
            <person name="Orbach M."/>
            <person name="Henn M.R."/>
            <person name="Cole G.T."/>
            <person name="Galgiani J."/>
            <person name="Gardner M.J."/>
            <person name="Kirkland T.N."/>
            <person name="Taylor J.W."/>
            <person name="Young S.K."/>
            <person name="Zeng Q."/>
            <person name="Koehrsen M."/>
            <person name="Alvarado L."/>
            <person name="Berlin A."/>
            <person name="Borenstein D."/>
            <person name="Chapman S.B."/>
            <person name="Chen Z."/>
            <person name="Engels R."/>
            <person name="Freedman E."/>
            <person name="Gellesch M."/>
            <person name="Goldberg J."/>
            <person name="Griggs A."/>
            <person name="Gujja S."/>
            <person name="Heilman E."/>
            <person name="Heiman D."/>
            <person name="Howarth C."/>
            <person name="Jen D."/>
            <person name="Larson L."/>
            <person name="Mehta T."/>
            <person name="Neiman D."/>
            <person name="Park D."/>
            <person name="Pearson M."/>
            <person name="Richards J."/>
            <person name="Roberts A."/>
            <person name="Saif S."/>
            <person name="Shea T."/>
            <person name="Shenoy N."/>
            <person name="Sisk P."/>
            <person name="Stolte C."/>
            <person name="Sykes S."/>
            <person name="Walk T."/>
            <person name="White J."/>
            <person name="Yandava C."/>
            <person name="Haas B."/>
            <person name="Nusbaum C."/>
            <person name="Birren B."/>
        </authorList>
    </citation>
    <scope>NUCLEOTIDE SEQUENCE [LARGE SCALE GENOMIC DNA]</scope>
    <source>
        <strain>RMSCC 757 / Silveira</strain>
    </source>
</reference>
<reference key="2">
    <citation type="journal article" date="1990" name="J. Clin. Microbiol.">
        <title>Purification and amino-terminal sequence analysis of the complement-fixing and precipitin antigens from Coccidioides immitis.</title>
        <authorList>
            <person name="Resnick S."/>
            <person name="Zimmer B."/>
            <person name="Pappagianis D."/>
            <person name="Eakin A."/>
            <person name="McKerrow J."/>
        </authorList>
    </citation>
    <scope>PROTEIN SEQUENCE OF 21-46</scope>
    <source>
        <strain>RMSCC 757 / Silveira</strain>
    </source>
</reference>
<gene>
    <name type="primary">CSA</name>
    <name type="synonym">CAG</name>
    <name type="ORF">CPSG_02027</name>
</gene>
<keyword id="KW-0903">Direct protein sequencing</keyword>
<keyword id="KW-0325">Glycoprotein</keyword>
<keyword id="KW-1185">Reference proteome</keyword>
<keyword id="KW-0964">Secreted</keyword>
<keyword id="KW-0732">Signal</keyword>
<accession>E9CX44</accession>
<accession>C5PH30</accession>
<accession>Q00398</accession>
<accession>Q8J1X8</accession>
<sequence>MKFSLLSAIAAAVFVPFTSATPLASTADLSYDTHYDDPSLPLSGVTCSDGDNGMITKGYNTAGEIPNYPHVGGAFTVETWNSPNCGKCYKVTYNAKTIFLTAIDHSNSGFNIAKKSMDVLTNGRAEELGRIKVTYEEVASSLCGLK</sequence>
<protein>
    <recommendedName>
        <fullName>Heat-stable 19 kDa antigen</fullName>
    </recommendedName>
    <alternativeName>
        <fullName>Coccidioides-specific antigen</fullName>
        <shortName>CS antigen</shortName>
        <shortName>CS-AG</shortName>
    </alternativeName>
    <alternativeName>
        <fullName>Precipitin antigen</fullName>
    </alternativeName>
    <alternativeName>
        <fullName>TP-AG</fullName>
    </alternativeName>
</protein>
<name>AG19_COCPS</name>
<dbReference type="EMBL" id="GL636487">
    <property type="protein sequence ID" value="EFW21870.1"/>
    <property type="molecule type" value="Genomic_DNA"/>
</dbReference>
<dbReference type="SMR" id="E9CX44"/>
<dbReference type="STRING" id="443226.E9CX44"/>
<dbReference type="VEuPathDB" id="FungiDB:CPSG_02027"/>
<dbReference type="VEuPathDB" id="FungiDB:D8B26_001987"/>
<dbReference type="eggNOG" id="ENOG502SQTH">
    <property type="taxonomic scope" value="Eukaryota"/>
</dbReference>
<dbReference type="HOGENOM" id="CLU_111635_0_0_1"/>
<dbReference type="OMA" id="CHRLEYG"/>
<dbReference type="OrthoDB" id="25590at33183"/>
<dbReference type="Proteomes" id="UP000002497">
    <property type="component" value="Unassembled WGS sequence"/>
</dbReference>
<dbReference type="GO" id="GO:0005576">
    <property type="term" value="C:extracellular region"/>
    <property type="evidence" value="ECO:0007669"/>
    <property type="project" value="UniProtKB-SubCell"/>
</dbReference>
<dbReference type="CDD" id="cd22778">
    <property type="entry name" value="DPBB_CEPL-like"/>
    <property type="match status" value="1"/>
</dbReference>
<dbReference type="Gene3D" id="2.40.40.10">
    <property type="entry name" value="RlpA-like domain"/>
    <property type="match status" value="1"/>
</dbReference>
<dbReference type="InterPro" id="IPR010829">
    <property type="entry name" value="Cerato-platanin"/>
</dbReference>
<dbReference type="InterPro" id="IPR036908">
    <property type="entry name" value="RlpA-like_sf"/>
</dbReference>
<dbReference type="Pfam" id="PF07249">
    <property type="entry name" value="Cerato-platanin"/>
    <property type="match status" value="1"/>
</dbReference>
<dbReference type="SUPFAM" id="SSF50685">
    <property type="entry name" value="Barwin-like endoglucanases"/>
    <property type="match status" value="1"/>
</dbReference>
<proteinExistence type="evidence at protein level"/>
<feature type="signal peptide" evidence="1">
    <location>
        <begin position="1"/>
        <end position="20"/>
    </location>
</feature>
<feature type="chain" id="PRO_0000409489" description="Heat-stable 19 kDa antigen">
    <location>
        <begin position="21"/>
        <end position="146"/>
    </location>
</feature>
<comment type="subcellular location">
    <subcellularLocation>
        <location>Secreted</location>
    </subcellularLocation>
</comment>
<comment type="PTM">
    <text>Glycosylated.</text>
</comment>
<comment type="similarity">
    <text evidence="2">Belongs to the cerato-platanin family.</text>
</comment>
<organism>
    <name type="scientific">Coccidioides posadasii (strain RMSCC 757 / Silveira)</name>
    <name type="common">Valley fever fungus</name>
    <dbReference type="NCBI Taxonomy" id="443226"/>
    <lineage>
        <taxon>Eukaryota</taxon>
        <taxon>Fungi</taxon>
        <taxon>Dikarya</taxon>
        <taxon>Ascomycota</taxon>
        <taxon>Pezizomycotina</taxon>
        <taxon>Eurotiomycetes</taxon>
        <taxon>Eurotiomycetidae</taxon>
        <taxon>Onygenales</taxon>
        <taxon>Onygenaceae</taxon>
        <taxon>Coccidioides</taxon>
    </lineage>
</organism>